<keyword id="KW-0963">Cytoplasm</keyword>
<keyword id="KW-1185">Reference proteome</keyword>
<keyword id="KW-0690">Ribosome biogenesis</keyword>
<evidence type="ECO:0000255" key="1">
    <source>
        <dbReference type="HAMAP-Rule" id="MF_00003"/>
    </source>
</evidence>
<name>RBFA_SINFN</name>
<dbReference type="EMBL" id="CP001389">
    <property type="protein sequence ID" value="ACP27292.1"/>
    <property type="molecule type" value="Genomic_DNA"/>
</dbReference>
<dbReference type="RefSeq" id="WP_012710037.1">
    <property type="nucleotide sequence ID" value="NC_012587.1"/>
</dbReference>
<dbReference type="RefSeq" id="YP_002828045.1">
    <property type="nucleotide sequence ID" value="NC_012587.1"/>
</dbReference>
<dbReference type="SMR" id="C3MC67"/>
<dbReference type="STRING" id="394.NGR_c35690"/>
<dbReference type="KEGG" id="rhi:NGR_c35690"/>
<dbReference type="PATRIC" id="fig|394.7.peg.6421"/>
<dbReference type="eggNOG" id="COG0858">
    <property type="taxonomic scope" value="Bacteria"/>
</dbReference>
<dbReference type="HOGENOM" id="CLU_089475_1_0_5"/>
<dbReference type="OrthoDB" id="9805051at2"/>
<dbReference type="Proteomes" id="UP000001054">
    <property type="component" value="Chromosome"/>
</dbReference>
<dbReference type="GO" id="GO:0005829">
    <property type="term" value="C:cytosol"/>
    <property type="evidence" value="ECO:0007669"/>
    <property type="project" value="TreeGrafter"/>
</dbReference>
<dbReference type="GO" id="GO:0043024">
    <property type="term" value="F:ribosomal small subunit binding"/>
    <property type="evidence" value="ECO:0007669"/>
    <property type="project" value="TreeGrafter"/>
</dbReference>
<dbReference type="GO" id="GO:0030490">
    <property type="term" value="P:maturation of SSU-rRNA"/>
    <property type="evidence" value="ECO:0007669"/>
    <property type="project" value="UniProtKB-UniRule"/>
</dbReference>
<dbReference type="Gene3D" id="3.30.300.20">
    <property type="match status" value="1"/>
</dbReference>
<dbReference type="HAMAP" id="MF_00003">
    <property type="entry name" value="RbfA"/>
    <property type="match status" value="1"/>
</dbReference>
<dbReference type="InterPro" id="IPR015946">
    <property type="entry name" value="KH_dom-like_a/b"/>
</dbReference>
<dbReference type="InterPro" id="IPR000238">
    <property type="entry name" value="RbfA"/>
</dbReference>
<dbReference type="InterPro" id="IPR023799">
    <property type="entry name" value="RbfA_dom_sf"/>
</dbReference>
<dbReference type="InterPro" id="IPR020053">
    <property type="entry name" value="Ribosome-bd_factorA_CS"/>
</dbReference>
<dbReference type="NCBIfam" id="NF001802">
    <property type="entry name" value="PRK00521.2-5"/>
    <property type="match status" value="1"/>
</dbReference>
<dbReference type="NCBIfam" id="TIGR00082">
    <property type="entry name" value="rbfA"/>
    <property type="match status" value="1"/>
</dbReference>
<dbReference type="PANTHER" id="PTHR33515">
    <property type="entry name" value="RIBOSOME-BINDING FACTOR A, CHLOROPLASTIC-RELATED"/>
    <property type="match status" value="1"/>
</dbReference>
<dbReference type="PANTHER" id="PTHR33515:SF1">
    <property type="entry name" value="RIBOSOME-BINDING FACTOR A, CHLOROPLASTIC-RELATED"/>
    <property type="match status" value="1"/>
</dbReference>
<dbReference type="Pfam" id="PF02033">
    <property type="entry name" value="RBFA"/>
    <property type="match status" value="1"/>
</dbReference>
<dbReference type="SUPFAM" id="SSF89919">
    <property type="entry name" value="Ribosome-binding factor A, RbfA"/>
    <property type="match status" value="1"/>
</dbReference>
<dbReference type="PROSITE" id="PS01319">
    <property type="entry name" value="RBFA"/>
    <property type="match status" value="1"/>
</dbReference>
<accession>C3MC67</accession>
<sequence>MTRSTSSAPSQRMLRVGEQVRAAITQVLQRGEVRDPLIEKTVISISEVRMSPDLKIATAYVTPLGVADHAAVIEALNKHAKFIRGRLGPQLRQMKYMPDVRFRDDTSFDNYQKIDALLRSPEVSRDLDPDTDDQE</sequence>
<organism>
    <name type="scientific">Sinorhizobium fredii (strain NBRC 101917 / NGR234)</name>
    <dbReference type="NCBI Taxonomy" id="394"/>
    <lineage>
        <taxon>Bacteria</taxon>
        <taxon>Pseudomonadati</taxon>
        <taxon>Pseudomonadota</taxon>
        <taxon>Alphaproteobacteria</taxon>
        <taxon>Hyphomicrobiales</taxon>
        <taxon>Rhizobiaceae</taxon>
        <taxon>Sinorhizobium/Ensifer group</taxon>
        <taxon>Sinorhizobium</taxon>
    </lineage>
</organism>
<protein>
    <recommendedName>
        <fullName evidence="1">Ribosome-binding factor A</fullName>
    </recommendedName>
</protein>
<comment type="function">
    <text evidence="1">One of several proteins that assist in the late maturation steps of the functional core of the 30S ribosomal subunit. Associates with free 30S ribosomal subunits (but not with 30S subunits that are part of 70S ribosomes or polysomes). Required for efficient processing of 16S rRNA. May interact with the 5'-terminal helix region of 16S rRNA.</text>
</comment>
<comment type="subunit">
    <text evidence="1">Monomer. Binds 30S ribosomal subunits, but not 50S ribosomal subunits or 70S ribosomes.</text>
</comment>
<comment type="subcellular location">
    <subcellularLocation>
        <location evidence="1">Cytoplasm</location>
    </subcellularLocation>
</comment>
<comment type="similarity">
    <text evidence="1">Belongs to the RbfA family.</text>
</comment>
<gene>
    <name evidence="1" type="primary">rbfA</name>
    <name type="ordered locus">NGR_c35690</name>
</gene>
<reference key="1">
    <citation type="journal article" date="2009" name="Appl. Environ. Microbiol.">
        <title>Rhizobium sp. strain NGR234 possesses a remarkable number of secretion systems.</title>
        <authorList>
            <person name="Schmeisser C."/>
            <person name="Liesegang H."/>
            <person name="Krysciak D."/>
            <person name="Bakkou N."/>
            <person name="Le Quere A."/>
            <person name="Wollherr A."/>
            <person name="Heinemeyer I."/>
            <person name="Morgenstern B."/>
            <person name="Pommerening-Roeser A."/>
            <person name="Flores M."/>
            <person name="Palacios R."/>
            <person name="Brenner S."/>
            <person name="Gottschalk G."/>
            <person name="Schmitz R.A."/>
            <person name="Broughton W.J."/>
            <person name="Perret X."/>
            <person name="Strittmatter A.W."/>
            <person name="Streit W.R."/>
        </authorList>
    </citation>
    <scope>NUCLEOTIDE SEQUENCE [LARGE SCALE GENOMIC DNA]</scope>
    <source>
        <strain>NBRC 101917 / NGR234</strain>
    </source>
</reference>
<feature type="chain" id="PRO_1000193270" description="Ribosome-binding factor A">
    <location>
        <begin position="1"/>
        <end position="135"/>
    </location>
</feature>
<proteinExistence type="inferred from homology"/>